<protein>
    <recommendedName>
        <fullName evidence="1">Co-chaperonin GroES</fullName>
    </recommendedName>
    <alternativeName>
        <fullName evidence="1">10 kDa chaperonin</fullName>
    </alternativeName>
    <alternativeName>
        <fullName evidence="1">Chaperonin-10</fullName>
        <shortName evidence="1">Cpn10</shortName>
    </alternativeName>
</protein>
<proteinExistence type="inferred from homology"/>
<feature type="chain" id="PRO_1000025200" description="Co-chaperonin GroES">
    <location>
        <begin position="1"/>
        <end position="97"/>
    </location>
</feature>
<reference key="1">
    <citation type="journal article" date="2006" name="J. Bacteriol.">
        <title>Genome sequence of Aeromonas hydrophila ATCC 7966T: jack of all trades.</title>
        <authorList>
            <person name="Seshadri R."/>
            <person name="Joseph S.W."/>
            <person name="Chopra A.K."/>
            <person name="Sha J."/>
            <person name="Shaw J."/>
            <person name="Graf J."/>
            <person name="Haft D.H."/>
            <person name="Wu M."/>
            <person name="Ren Q."/>
            <person name="Rosovitz M.J."/>
            <person name="Madupu R."/>
            <person name="Tallon L."/>
            <person name="Kim M."/>
            <person name="Jin S."/>
            <person name="Vuong H."/>
            <person name="Stine O.C."/>
            <person name="Ali A."/>
            <person name="Horneman A.J."/>
            <person name="Heidelberg J.F."/>
        </authorList>
    </citation>
    <scope>NUCLEOTIDE SEQUENCE [LARGE SCALE GENOMIC DNA]</scope>
    <source>
        <strain>ATCC 7966 / DSM 30187 / BCRC 13018 / CCUG 14551 / JCM 1027 / KCTC 2358 / NCIMB 9240 / NCTC 8049</strain>
    </source>
</reference>
<evidence type="ECO:0000255" key="1">
    <source>
        <dbReference type="HAMAP-Rule" id="MF_00580"/>
    </source>
</evidence>
<sequence>MKIRPLHDRVIIKRIEAEAKSAGGIVLTGTAAQKSTRGEVLAVGTGRILDNGDVKALAVKVGDKVIFNEGYGVKTEKLDGQDVLILSETDILAIVEE</sequence>
<organism>
    <name type="scientific">Aeromonas hydrophila subsp. hydrophila (strain ATCC 7966 / DSM 30187 / BCRC 13018 / CCUG 14551 / JCM 1027 / KCTC 2358 / NCIMB 9240 / NCTC 8049)</name>
    <dbReference type="NCBI Taxonomy" id="380703"/>
    <lineage>
        <taxon>Bacteria</taxon>
        <taxon>Pseudomonadati</taxon>
        <taxon>Pseudomonadota</taxon>
        <taxon>Gammaproteobacteria</taxon>
        <taxon>Aeromonadales</taxon>
        <taxon>Aeromonadaceae</taxon>
        <taxon>Aeromonas</taxon>
    </lineage>
</organism>
<comment type="function">
    <text evidence="1">Together with the chaperonin GroEL, plays an essential role in assisting protein folding. The GroEL-GroES system forms a nano-cage that allows encapsulation of the non-native substrate proteins and provides a physical environment optimized to promote and accelerate protein folding. GroES binds to the apical surface of the GroEL ring, thereby capping the opening of the GroEL channel.</text>
</comment>
<comment type="subunit">
    <text evidence="1">Heptamer of 7 subunits arranged in a ring. Interacts with the chaperonin GroEL.</text>
</comment>
<comment type="subcellular location">
    <subcellularLocation>
        <location evidence="1">Cytoplasm</location>
    </subcellularLocation>
</comment>
<comment type="similarity">
    <text evidence="1">Belongs to the GroES chaperonin family.</text>
</comment>
<name>CH10_AERHH</name>
<gene>
    <name evidence="1" type="primary">groES</name>
    <name evidence="1" type="synonym">groS</name>
    <name type="ordered locus">AHA_0859</name>
</gene>
<keyword id="KW-0143">Chaperone</keyword>
<keyword id="KW-0963">Cytoplasm</keyword>
<keyword id="KW-1185">Reference proteome</keyword>
<dbReference type="EMBL" id="CP000462">
    <property type="protein sequence ID" value="ABK39728.1"/>
    <property type="molecule type" value="Genomic_DNA"/>
</dbReference>
<dbReference type="RefSeq" id="WP_005309514.1">
    <property type="nucleotide sequence ID" value="NC_008570.1"/>
</dbReference>
<dbReference type="RefSeq" id="YP_855401.1">
    <property type="nucleotide sequence ID" value="NC_008570.1"/>
</dbReference>
<dbReference type="SMR" id="A0KGL0"/>
<dbReference type="STRING" id="380703.AHA_0859"/>
<dbReference type="EnsemblBacteria" id="ABK39728">
    <property type="protein sequence ID" value="ABK39728"/>
    <property type="gene ID" value="AHA_0859"/>
</dbReference>
<dbReference type="KEGG" id="aha:AHA_0859"/>
<dbReference type="PATRIC" id="fig|380703.7.peg.862"/>
<dbReference type="eggNOG" id="COG0234">
    <property type="taxonomic scope" value="Bacteria"/>
</dbReference>
<dbReference type="HOGENOM" id="CLU_132825_1_1_6"/>
<dbReference type="OrthoDB" id="9806791at2"/>
<dbReference type="PRO" id="PR:A0KGL0"/>
<dbReference type="Proteomes" id="UP000000756">
    <property type="component" value="Chromosome"/>
</dbReference>
<dbReference type="GO" id="GO:0005737">
    <property type="term" value="C:cytoplasm"/>
    <property type="evidence" value="ECO:0007669"/>
    <property type="project" value="UniProtKB-SubCell"/>
</dbReference>
<dbReference type="GO" id="GO:0005524">
    <property type="term" value="F:ATP binding"/>
    <property type="evidence" value="ECO:0007669"/>
    <property type="project" value="InterPro"/>
</dbReference>
<dbReference type="GO" id="GO:0046872">
    <property type="term" value="F:metal ion binding"/>
    <property type="evidence" value="ECO:0007669"/>
    <property type="project" value="TreeGrafter"/>
</dbReference>
<dbReference type="GO" id="GO:0044183">
    <property type="term" value="F:protein folding chaperone"/>
    <property type="evidence" value="ECO:0007669"/>
    <property type="project" value="InterPro"/>
</dbReference>
<dbReference type="GO" id="GO:0051087">
    <property type="term" value="F:protein-folding chaperone binding"/>
    <property type="evidence" value="ECO:0007669"/>
    <property type="project" value="TreeGrafter"/>
</dbReference>
<dbReference type="GO" id="GO:0051082">
    <property type="term" value="F:unfolded protein binding"/>
    <property type="evidence" value="ECO:0007669"/>
    <property type="project" value="TreeGrafter"/>
</dbReference>
<dbReference type="GO" id="GO:0051085">
    <property type="term" value="P:chaperone cofactor-dependent protein refolding"/>
    <property type="evidence" value="ECO:0007669"/>
    <property type="project" value="TreeGrafter"/>
</dbReference>
<dbReference type="CDD" id="cd00320">
    <property type="entry name" value="cpn10"/>
    <property type="match status" value="1"/>
</dbReference>
<dbReference type="FunFam" id="2.30.33.40:FF:000001">
    <property type="entry name" value="10 kDa chaperonin"/>
    <property type="match status" value="1"/>
</dbReference>
<dbReference type="Gene3D" id="2.30.33.40">
    <property type="entry name" value="GroES chaperonin"/>
    <property type="match status" value="1"/>
</dbReference>
<dbReference type="HAMAP" id="MF_00580">
    <property type="entry name" value="CH10"/>
    <property type="match status" value="1"/>
</dbReference>
<dbReference type="InterPro" id="IPR020818">
    <property type="entry name" value="Chaperonin_GroES"/>
</dbReference>
<dbReference type="InterPro" id="IPR037124">
    <property type="entry name" value="Chaperonin_GroES_sf"/>
</dbReference>
<dbReference type="InterPro" id="IPR018369">
    <property type="entry name" value="Chaprnonin_Cpn10_CS"/>
</dbReference>
<dbReference type="InterPro" id="IPR011032">
    <property type="entry name" value="GroES-like_sf"/>
</dbReference>
<dbReference type="NCBIfam" id="NF001526">
    <property type="entry name" value="PRK00364.1-1"/>
    <property type="match status" value="1"/>
</dbReference>
<dbReference type="NCBIfam" id="NF001527">
    <property type="entry name" value="PRK00364.1-2"/>
    <property type="match status" value="1"/>
</dbReference>
<dbReference type="NCBIfam" id="NF001531">
    <property type="entry name" value="PRK00364.2-2"/>
    <property type="match status" value="1"/>
</dbReference>
<dbReference type="PANTHER" id="PTHR10772">
    <property type="entry name" value="10 KDA HEAT SHOCK PROTEIN"/>
    <property type="match status" value="1"/>
</dbReference>
<dbReference type="PANTHER" id="PTHR10772:SF58">
    <property type="entry name" value="CO-CHAPERONIN GROES"/>
    <property type="match status" value="1"/>
</dbReference>
<dbReference type="Pfam" id="PF00166">
    <property type="entry name" value="Cpn10"/>
    <property type="match status" value="1"/>
</dbReference>
<dbReference type="PRINTS" id="PR00297">
    <property type="entry name" value="CHAPERONIN10"/>
</dbReference>
<dbReference type="SMART" id="SM00883">
    <property type="entry name" value="Cpn10"/>
    <property type="match status" value="1"/>
</dbReference>
<dbReference type="SUPFAM" id="SSF50129">
    <property type="entry name" value="GroES-like"/>
    <property type="match status" value="1"/>
</dbReference>
<dbReference type="PROSITE" id="PS00681">
    <property type="entry name" value="CHAPERONINS_CPN10"/>
    <property type="match status" value="1"/>
</dbReference>
<accession>A0KGL0</accession>